<gene>
    <name evidence="6" type="primary">norA'</name>
</gene>
<name>NORA2_STRON</name>
<comment type="function">
    <text evidence="5">Component of a type I modular polyketide synthase (PKS) that generates the backbone of the antibiotic spectinabilin (also known as neoaureothin), a nitroaryl-substituted polyketide metabolite (PubMed:17763486). This PKS system accepts the unusual starter unit 4-nitrobenzoyl-CoA and extends it by 6 molecules of (S)-methylmalonyl-CoA and a single molecule of malonyl-CoA (PubMed:17763486).</text>
</comment>
<comment type="catalytic activity">
    <reaction evidence="8">
        <text>4-nitrobenzoyl-CoA + 6 (S)-methylmalonyl-CoA + malonyl-CoA + 6 NADPH + 12 H(+) = demethyldeoxyspectinabilin + 7 CO2 + 6 NADP(+) + 8 CoA + 5 H2O</text>
        <dbReference type="Rhea" id="RHEA:58944"/>
        <dbReference type="ChEBI" id="CHEBI:15377"/>
        <dbReference type="ChEBI" id="CHEBI:15378"/>
        <dbReference type="ChEBI" id="CHEBI:16526"/>
        <dbReference type="ChEBI" id="CHEBI:57287"/>
        <dbReference type="ChEBI" id="CHEBI:57327"/>
        <dbReference type="ChEBI" id="CHEBI:57384"/>
        <dbReference type="ChEBI" id="CHEBI:57783"/>
        <dbReference type="ChEBI" id="CHEBI:58349"/>
        <dbReference type="ChEBI" id="CHEBI:142871"/>
        <dbReference type="ChEBI" id="CHEBI:142872"/>
        <dbReference type="EC" id="2.3.1.290"/>
    </reaction>
    <physiologicalReaction direction="left-to-right" evidence="8">
        <dbReference type="Rhea" id="RHEA:58945"/>
    </physiologicalReaction>
</comment>
<comment type="cofactor">
    <cofactor evidence="2">
        <name>pantetheine 4'-phosphate</name>
        <dbReference type="ChEBI" id="CHEBI:47942"/>
    </cofactor>
</comment>
<comment type="pathway">
    <text evidence="8">Antibiotic biosynthesis.</text>
</comment>
<comment type="pathway">
    <text evidence="8">Polyketide biosynthesis.</text>
</comment>
<comment type="subunit">
    <text evidence="5">The spectinabilin polyketide synthase complex is composed of 4 proteins, NorA, NorA', NorB and NorC (PubMed:17763486). The complex comprises 6 modules with a total of 28 catalytic domains catalyzing 7 chain elongations (PubMed:17763486). NorA comprises one module, NorA' two modules, NorB one module and NorC two modules (PubMed:17763486).</text>
</comment>
<proteinExistence type="evidence at protein level"/>
<accession>B4ER95</accession>
<sequence length="3625" mass="378386">MTKDDKTLDYLKRLTAELVQTRERLRTAQAASREPVAVVSMACRFPGGVSSPEELWRLVAAGRDGITPIPAGRGWDTEGLYDPDPDRVGKSYAREGGFLDDIASFDAGLFGISPREALVMDPQQRLLLEVSRETLERAGIAPGTLGGSRTGVFTGLMGGDYTARLPGILGEFEGQLEIGRAGSVASGRVAYTFGLEGPALTLDTACSSSLVALHLAVRALRDGECDLALAGGATLMSSPAALLEFSRQRALSPDGRCKAFAGQADGTGLAEGVGVVLLERLTDARRNGHPVLAVVRGSAVNQDGASNGLTAPNGPAQQRVIRAALANAGLTAAEVDAVEAHGTGTTLGDPIEAQALLATYGRRRDPQQPLWLGSLKSNIGHTQAAAGIAGVIKTVMALGAGQLPPTLHIDHPTPHVDWSEGTVRLLTEARPWPDTGRPRRVGVSSFGISGTNAHVILEQAEQPPAEDNPSRPLSPVPWVLSAQTPRALRAQAARLRDHLADAPVPHPADIAYSLAVTRDALRHRAVVVGRDPGELLRGVSALADGEPAPGLVEGEAREVGRTVLVFPGQGSQWAGMAQPLWRHSTVFRERMEACAEALAPHVDWSLREMVDAPAEDARWDRVDVVQPVLWAVMVSLAGLWRSHGVEPAAVVGHSQGEIAAACVAGALSLEDGARVVALRSRLVAERLAGKGGMVSVAAPVAEAEDRLARRPGRLALAAVNGPSSVVVSGDPAALEELLADCARDGIRARRVAVDYASHSPQVAALREELLAALAPIRPRAGEIPLYSTVTGGPLAGERLTGEHWYRNLRQTVRLAGTVRTLAAAGHSVFVECSPHPVLTPGLTETLTGLDEDALVVGTLRRDDGGPERFLCSLGELFAGGRAPDWERVFTGTGARRVALPTYAFERRRHWLDAVRPQGDPVPAGLSPLDHPWWGAVTELPEDEGWLLTGRLSRESSPWLGEHTVDGNVLLPGTAFLELALQAAEEAGCAGVAELTLQAPLLLPARGGIRLCAVVGAAGADGTHPLTLHARPEDAPDAPWTRQATGTLTRTARPAEPMPEDWPPPGADPLPVDRIYGELAALSLEYGPAFRGLRAAWRRGEELFAEVALDESGESQGFALHPALLDAALHPVAADEDADGPRLPFSWTGVTLHAVGANRLRVRIGPAGPDAVTLEAADGTGAPVAFVESLAVRPLTPGSGAPAAVTPADSLFAVDWTPAPAAPSATSRTWAVLDGAESLAPAIEAAGCEVLRRPDLTAAIAAPGLPDAMPAARDLGLGERSDAAPGLPDAMLAARDAAPGELSAAVPEPPDVVLAALDPGRGELPAAAREVTGRALALAQRWLAEDGPSRLVLLTRGAVAATGTETADPALAAAWGLLRSAQSEHPDRLVLVDWDGQPSSAAALPAAVSGDEPQLALRGGRILAPRLRRLPVTRPAPQAFDAEGTVLVTGAAGVLGRVITRHLVRTHGVRRLLLVSRRGPEAPGAAELTAELGELGASVRWTACDVADRAALADVLARIPARHPLRAVVHAGGLLDDGVVSALAPDRLETVFRPKIDAVVNLHELTSDLTAFVLFSSAAGTFGTAGQGGYAAANAFLDAFAGLRRSQGLPALSLAWGLWAETSALTARMSDTDRDRMHRSGVTGLSGAEGTALFDAALAAGPPMVLPTRLDLAAVRARAAAEGVPALLRALVKPPARRAGTATESGSALARELAALAPQDRAGAVLETVRAQAAAVLGHTGTAEVEPQRAFKELGFDSLTGVELRNRLARVTGLRLPATLVFDHPTPHSLAAHLLGRLTGGQRPRSTAPHAPARPDEPIAIIGMACRFPGGIASPEDLWRLLERGGDAISAFPADRGWDLDPAEYTAEGGFLREAARFDPEFFGISPREAVAMDPQQRLLLEITWEALERAGLDPTALRGSRTGVFAGLMYHDYTVRHAAAPGEAAGYLGTGGSGSVASGRIAYTFGFEGPAVTVDTACSSSLVALHLAAQSVRAGDCELALAGGVTVMCTPSAFTEFSRQGALAADARCKPFAAAADGTVWGEGAGVLLVERLSEAQRQGHRVLAVLRGSAVNQDGASNGLTAPNGPSQERVIRHALATARLRARDVDAVEAHGTGTTLGDPIEAQALLATYGQDRPAGRPLWLGSVKSNLGHPQAAAGVAGVIKVVLALRQGVLPRTLHVDRPTPQVDWSQGAVELLTEARPWPETGRPRRAAVSSFGISGTNAHVVLEQAPAPAEHDPQPAAVPGPLPLVLSARGEPALRAQAAGLRERLTADPGLQLADVAGSLLTTRAALEHRAVVLGDGRAELLAGLAALAHGRETPAVVRGTACAPGKTVFVFPGQGAQWPGMAAELWESSPVFRKRLGECAEALAPWVDFDAVEVVRGTATGIDPERVDVVQPALWAVMVALAGLWRSYGVEPAAVVGHSQGEIAAACVAGGLTLADGARVVALRSRALTALAGRGGMLSLALTPAEAGKLVAGRGDDRLSLAAVNGPESVVVSGDTDALEEVLAHCERTGVWARRIPVDYASHSPQVAEVRAHIQRDLAELRPRTGQVAFFSTVTGRFEDTAGLDGDYWYRNLREPVRFEPAVRELAGLGFGAFVETSPHPVLTTAVGEALAGRPGPPPVVVGSLRRGQGGPLRFLASVAEAHTRGIAVDWSTLWAGRTPRVVDLPTYPFQRRRFWLPAPAASGEVTAAGLGRAEHPLLGARMELADPPETVLTARWSLDTHPWIADHTVADTVIVPGTAFLELALLAGAETGCPQVRELIQQAPLVLAERGAARLQMRIAPPAEDGTRALAIHSRPEDASPEEPWLCHARGLLSEEEPATPPALDGSWPPPGAEPIELVGFYQHLDEIGLGYGPAFRGLRAAWRLGEEILAEAALPEPQQDETAGYRAHPALLDAALHSCLLRGRGERPEAAAMPFAWNDVACHADCGPAVRVRVTPGAGQEVSVVVADVQGSPAVTIRSLAARPVPAGQLRAAGGRSGSLFHLTWTPAPTDTGASPGAWAVLGEDDPGLALPYFPGLPALWAAYDGGATAPELVLAPLAGGPGDGPERSRELTCRALELLQSWLADDRTETRRLVIVTRGAVTASDDDPPPDPAAAAVWGLVRSAQSEHPGRFLLADLDRHPDSAPALTAALATALALDEPQLALRAGRVLLPRIQRAPAAQEGTPPWDPQGTVLITGASGTLGRAVARHLVTTHGVRRLLLVGRHGGAGEEAARLTTELAGHQATVDWAACDAADREAIAAVLASIPAAHPLTAVIHAAGVLDDGVLPALSPQRIDAVFRPKADAARHLDALTRTASPPALVVFSSAAATLGSAGQANYAAANAFLDALILARRRAGFPGQSLAWGLWSETSEMTAALGQAGRARLARSGLQGMPTEEALALLDTALATDRPLLLPMRLDPPALREGAGPLPPVLRGLVRAPARRGGPGRAEDAAALRRRLAALTPAERDRQLTDLVRAQAATVLGHPGAEAVGRDRAFKELGFDSLTAVELRNRLSTATGLRLPPTLVFDHPTPAALAGHLSTRLAPDDDPPDAPHDSEREVRRALAAIPLTRLRDAGLLDALLELAGRPAAGAAPPDDGEPGSIDRLDAEGLLAMALNNQAHAETEDHDAGW</sequence>
<organism>
    <name type="scientific">Streptomyces orinoci</name>
    <name type="common">Streptoverticillium orinoci</name>
    <dbReference type="NCBI Taxonomy" id="67339"/>
    <lineage>
        <taxon>Bacteria</taxon>
        <taxon>Bacillati</taxon>
        <taxon>Actinomycetota</taxon>
        <taxon>Actinomycetes</taxon>
        <taxon>Kitasatosporales</taxon>
        <taxon>Streptomycetaceae</taxon>
        <taxon>Streptomyces</taxon>
    </lineage>
</organism>
<feature type="chain" id="PRO_0000461598" description="Spectinabilin polyketide synthase system protein NorA'">
    <location>
        <begin position="1"/>
        <end position="3625"/>
    </location>
</feature>
<feature type="domain" description="Ketosynthase family 3 (KS3) 1" evidence="3">
    <location>
        <begin position="33"/>
        <end position="459"/>
    </location>
</feature>
<feature type="domain" description="Malonyl-CoA:ACP transacylase (MAT) 1" evidence="1">
    <location>
        <begin position="564"/>
        <end position="881"/>
    </location>
</feature>
<feature type="domain" description="PKS/mFAS DH 1" evidence="4">
    <location>
        <begin position="930"/>
        <end position="1200"/>
    </location>
</feature>
<feature type="domain" description="Ketoreductase (KR) 1" evidence="1">
    <location>
        <begin position="1443"/>
        <end position="1620"/>
    </location>
</feature>
<feature type="domain" description="Carrier 1" evidence="2">
    <location>
        <begin position="1722"/>
        <end position="1797"/>
    </location>
</feature>
<feature type="domain" description="Ketosynthase family 3 (KS3) 2" evidence="3">
    <location>
        <begin position="1815"/>
        <end position="2231"/>
    </location>
</feature>
<feature type="domain" description="Malonyl-CoA:ACP transacylase (MAT) 2" evidence="1">
    <location>
        <begin position="2336"/>
        <end position="2656"/>
    </location>
</feature>
<feature type="domain" description="PKS/mFAS DH 2" evidence="4">
    <location>
        <begin position="2704"/>
        <end position="2981"/>
    </location>
</feature>
<feature type="domain" description="Ketoreductase (KR) 2" evidence="1">
    <location>
        <begin position="3182"/>
        <end position="3361"/>
    </location>
</feature>
<feature type="domain" description="Carrier 2" evidence="2">
    <location>
        <begin position="3462"/>
        <end position="3537"/>
    </location>
</feature>
<feature type="region of interest" description="N-terminal hotdog fold 1" evidence="4">
    <location>
        <begin position="930"/>
        <end position="1054"/>
    </location>
</feature>
<feature type="region of interest" description="C-terminal hotdog fold 1" evidence="4">
    <location>
        <begin position="1066"/>
        <end position="1200"/>
    </location>
</feature>
<feature type="region of interest" description="N-terminal hotdog fold 2" evidence="4">
    <location>
        <begin position="2704"/>
        <end position="2829"/>
    </location>
</feature>
<feature type="region of interest" description="C-terminal hotdog fold 2" evidence="4">
    <location>
        <begin position="2842"/>
        <end position="2981"/>
    </location>
</feature>
<feature type="active site" description="For beta-ketoacyl synthase 1 activity" evidence="3">
    <location>
        <position position="206"/>
    </location>
</feature>
<feature type="active site" description="For beta-ketoacyl synthase 1 activity" evidence="3">
    <location>
        <position position="341"/>
    </location>
</feature>
<feature type="active site" description="For beta-ketoacyl synthase 1 activity" evidence="3">
    <location>
        <position position="381"/>
    </location>
</feature>
<feature type="active site" description="Proton acceptor; for dehydratase activity 1" evidence="4">
    <location>
        <position position="962"/>
    </location>
</feature>
<feature type="active site" description="Proton donor; for dehydratase activity 1" evidence="4">
    <location>
        <position position="1125"/>
    </location>
</feature>
<feature type="active site" description="For beta-ketoacyl synthase 2 activity" evidence="3">
    <location>
        <position position="1978"/>
    </location>
</feature>
<feature type="active site" description="For beta-ketoacyl synthase 2 activity" evidence="3">
    <location>
        <position position="2113"/>
    </location>
</feature>
<feature type="active site" description="For beta-ketoacyl synthase 2 activity" evidence="3">
    <location>
        <position position="2153"/>
    </location>
</feature>
<feature type="active site" description="Proton acceptor; for dehydratase activity 2" evidence="4">
    <location>
        <position position="2736"/>
    </location>
</feature>
<feature type="active site" description="Proton donor; for dehydratase activity 2" evidence="4">
    <location>
        <position position="2903"/>
    </location>
</feature>
<feature type="modified residue" description="O-(pantetheine 4'-phosphoryl)serine" evidence="2">
    <location>
        <position position="1757"/>
    </location>
</feature>
<feature type="modified residue" description="O-(pantetheine 4'-phosphoryl)serine" evidence="2">
    <location>
        <position position="3497"/>
    </location>
</feature>
<reference evidence="9" key="1">
    <citation type="journal article" date="2007" name="ChemBioChem">
        <title>Non-colinear polyketide biosynthesis in the aureothin and neoaureothin pathways: an evolutionary perspective.</title>
        <authorList>
            <person name="Traitcheva N."/>
            <person name="Jenke-Kodama H."/>
            <person name="He J."/>
            <person name="Dittmann E."/>
            <person name="Hertweck C."/>
        </authorList>
    </citation>
    <scope>NUCLEOTIDE SEQUENCE [GENOMIC DNA]</scope>
    <scope>FUNCTION</scope>
    <scope>SUBUNIT</scope>
    <source>
        <strain>HKI-0260</strain>
    </source>
</reference>
<dbReference type="EC" id="2.3.1.290" evidence="8"/>
<dbReference type="EMBL" id="AM778535">
    <property type="protein sequence ID" value="CAO85896.1"/>
    <property type="molecule type" value="Genomic_DNA"/>
</dbReference>
<dbReference type="KEGG" id="ag:CAO85896"/>
<dbReference type="BioCyc" id="MetaCyc:MONOMER-20715"/>
<dbReference type="BRENDA" id="2.3.1.290">
    <property type="organism ID" value="16282"/>
</dbReference>
<dbReference type="GO" id="GO:0004315">
    <property type="term" value="F:3-oxoacyl-[acyl-carrier-protein] synthase activity"/>
    <property type="evidence" value="ECO:0007669"/>
    <property type="project" value="InterPro"/>
</dbReference>
<dbReference type="GO" id="GO:0004312">
    <property type="term" value="F:fatty acid synthase activity"/>
    <property type="evidence" value="ECO:0007669"/>
    <property type="project" value="TreeGrafter"/>
</dbReference>
<dbReference type="GO" id="GO:0031177">
    <property type="term" value="F:phosphopantetheine binding"/>
    <property type="evidence" value="ECO:0007669"/>
    <property type="project" value="InterPro"/>
</dbReference>
<dbReference type="GO" id="GO:0017000">
    <property type="term" value="P:antibiotic biosynthetic process"/>
    <property type="evidence" value="ECO:0007669"/>
    <property type="project" value="UniProtKB-KW"/>
</dbReference>
<dbReference type="GO" id="GO:0006633">
    <property type="term" value="P:fatty acid biosynthetic process"/>
    <property type="evidence" value="ECO:0007669"/>
    <property type="project" value="InterPro"/>
</dbReference>
<dbReference type="GO" id="GO:0044550">
    <property type="term" value="P:secondary metabolite biosynthetic process"/>
    <property type="evidence" value="ECO:0007669"/>
    <property type="project" value="UniProtKB-ARBA"/>
</dbReference>
<dbReference type="CDD" id="cd08956">
    <property type="entry name" value="KR_3_FAS_SDR_x"/>
    <property type="match status" value="2"/>
</dbReference>
<dbReference type="CDD" id="cd00833">
    <property type="entry name" value="PKS"/>
    <property type="match status" value="2"/>
</dbReference>
<dbReference type="FunFam" id="3.40.47.10:FF:000019">
    <property type="entry name" value="Polyketide synthase type I"/>
    <property type="match status" value="2"/>
</dbReference>
<dbReference type="FunFam" id="3.40.366.10:FF:000002">
    <property type="entry name" value="Probable polyketide synthase 2"/>
    <property type="match status" value="2"/>
</dbReference>
<dbReference type="FunFam" id="1.10.1200.10:FF:000007">
    <property type="entry name" value="Probable polyketide synthase pks17"/>
    <property type="match status" value="2"/>
</dbReference>
<dbReference type="Gene3D" id="3.30.70.3290">
    <property type="match status" value="2"/>
</dbReference>
<dbReference type="Gene3D" id="3.40.47.10">
    <property type="match status" value="2"/>
</dbReference>
<dbReference type="Gene3D" id="1.10.1200.10">
    <property type="entry name" value="ACP-like"/>
    <property type="match status" value="2"/>
</dbReference>
<dbReference type="Gene3D" id="3.40.366.10">
    <property type="entry name" value="Malonyl-Coenzyme A Acyl Carrier Protein, domain 2"/>
    <property type="match status" value="2"/>
</dbReference>
<dbReference type="Gene3D" id="3.40.50.720">
    <property type="entry name" value="NAD(P)-binding Rossmann-like Domain"/>
    <property type="match status" value="2"/>
</dbReference>
<dbReference type="Gene3D" id="3.10.129.110">
    <property type="entry name" value="Polyketide synthase dehydratase"/>
    <property type="match status" value="2"/>
</dbReference>
<dbReference type="InterPro" id="IPR001227">
    <property type="entry name" value="Ac_transferase_dom_sf"/>
</dbReference>
<dbReference type="InterPro" id="IPR036736">
    <property type="entry name" value="ACP-like_sf"/>
</dbReference>
<dbReference type="InterPro" id="IPR014043">
    <property type="entry name" value="Acyl_transferase_dom"/>
</dbReference>
<dbReference type="InterPro" id="IPR016035">
    <property type="entry name" value="Acyl_Trfase/lysoPLipase"/>
</dbReference>
<dbReference type="InterPro" id="IPR018201">
    <property type="entry name" value="Ketoacyl_synth_AS"/>
</dbReference>
<dbReference type="InterPro" id="IPR014031">
    <property type="entry name" value="Ketoacyl_synth_C"/>
</dbReference>
<dbReference type="InterPro" id="IPR014030">
    <property type="entry name" value="Ketoacyl_synth_N"/>
</dbReference>
<dbReference type="InterPro" id="IPR016036">
    <property type="entry name" value="Malonyl_transacylase_ACP-bd"/>
</dbReference>
<dbReference type="InterPro" id="IPR036291">
    <property type="entry name" value="NAD(P)-bd_dom_sf"/>
</dbReference>
<dbReference type="InterPro" id="IPR032821">
    <property type="entry name" value="PKS_assoc"/>
</dbReference>
<dbReference type="InterPro" id="IPR020841">
    <property type="entry name" value="PKS_Beta-ketoAc_synthase_dom"/>
</dbReference>
<dbReference type="InterPro" id="IPR042104">
    <property type="entry name" value="PKS_dehydratase_sf"/>
</dbReference>
<dbReference type="InterPro" id="IPR020807">
    <property type="entry name" value="PKS_DH"/>
</dbReference>
<dbReference type="InterPro" id="IPR049551">
    <property type="entry name" value="PKS_DH_C"/>
</dbReference>
<dbReference type="InterPro" id="IPR049552">
    <property type="entry name" value="PKS_DH_N"/>
</dbReference>
<dbReference type="InterPro" id="IPR013968">
    <property type="entry name" value="PKS_KR"/>
</dbReference>
<dbReference type="InterPro" id="IPR049900">
    <property type="entry name" value="PKS_mFAS_DH"/>
</dbReference>
<dbReference type="InterPro" id="IPR050091">
    <property type="entry name" value="PKS_NRPS_Biosynth_Enz"/>
</dbReference>
<dbReference type="InterPro" id="IPR020806">
    <property type="entry name" value="PKS_PP-bd"/>
</dbReference>
<dbReference type="InterPro" id="IPR009081">
    <property type="entry name" value="PP-bd_ACP"/>
</dbReference>
<dbReference type="InterPro" id="IPR006162">
    <property type="entry name" value="Ppantetheine_attach_site"/>
</dbReference>
<dbReference type="InterPro" id="IPR055123">
    <property type="entry name" value="SpnB-like_Rossmann"/>
</dbReference>
<dbReference type="InterPro" id="IPR016039">
    <property type="entry name" value="Thiolase-like"/>
</dbReference>
<dbReference type="PANTHER" id="PTHR43775">
    <property type="entry name" value="FATTY ACID SYNTHASE"/>
    <property type="match status" value="1"/>
</dbReference>
<dbReference type="PANTHER" id="PTHR43775:SF51">
    <property type="entry name" value="INACTIVE PHENOLPHTHIOCEROL SYNTHESIS POLYKETIDE SYNTHASE TYPE I PKS1-RELATED"/>
    <property type="match status" value="1"/>
</dbReference>
<dbReference type="Pfam" id="PF00698">
    <property type="entry name" value="Acyl_transf_1"/>
    <property type="match status" value="2"/>
</dbReference>
<dbReference type="Pfam" id="PF16197">
    <property type="entry name" value="KAsynt_C_assoc"/>
    <property type="match status" value="2"/>
</dbReference>
<dbReference type="Pfam" id="PF00109">
    <property type="entry name" value="ketoacyl-synt"/>
    <property type="match status" value="2"/>
</dbReference>
<dbReference type="Pfam" id="PF02801">
    <property type="entry name" value="Ketoacyl-synt_C"/>
    <property type="match status" value="2"/>
</dbReference>
<dbReference type="Pfam" id="PF08659">
    <property type="entry name" value="KR"/>
    <property type="match status" value="2"/>
</dbReference>
<dbReference type="Pfam" id="PF21089">
    <property type="entry name" value="PKS_DH_N"/>
    <property type="match status" value="2"/>
</dbReference>
<dbReference type="Pfam" id="PF00550">
    <property type="entry name" value="PP-binding"/>
    <property type="match status" value="2"/>
</dbReference>
<dbReference type="Pfam" id="PF14765">
    <property type="entry name" value="PS-DH"/>
    <property type="match status" value="2"/>
</dbReference>
<dbReference type="Pfam" id="PF22953">
    <property type="entry name" value="SpnB_Rossmann"/>
    <property type="match status" value="2"/>
</dbReference>
<dbReference type="SMART" id="SM00827">
    <property type="entry name" value="PKS_AT"/>
    <property type="match status" value="2"/>
</dbReference>
<dbReference type="SMART" id="SM00826">
    <property type="entry name" value="PKS_DH"/>
    <property type="match status" value="2"/>
</dbReference>
<dbReference type="SMART" id="SM00822">
    <property type="entry name" value="PKS_KR"/>
    <property type="match status" value="2"/>
</dbReference>
<dbReference type="SMART" id="SM00825">
    <property type="entry name" value="PKS_KS"/>
    <property type="match status" value="2"/>
</dbReference>
<dbReference type="SMART" id="SM00823">
    <property type="entry name" value="PKS_PP"/>
    <property type="match status" value="2"/>
</dbReference>
<dbReference type="SMART" id="SM01294">
    <property type="entry name" value="PKS_PP_betabranch"/>
    <property type="match status" value="2"/>
</dbReference>
<dbReference type="SUPFAM" id="SSF47336">
    <property type="entry name" value="ACP-like"/>
    <property type="match status" value="2"/>
</dbReference>
<dbReference type="SUPFAM" id="SSF52151">
    <property type="entry name" value="FabD/lysophospholipase-like"/>
    <property type="match status" value="2"/>
</dbReference>
<dbReference type="SUPFAM" id="SSF51735">
    <property type="entry name" value="NAD(P)-binding Rossmann-fold domains"/>
    <property type="match status" value="4"/>
</dbReference>
<dbReference type="SUPFAM" id="SSF55048">
    <property type="entry name" value="Probable ACP-binding domain of malonyl-CoA ACP transacylase"/>
    <property type="match status" value="2"/>
</dbReference>
<dbReference type="SUPFAM" id="SSF53901">
    <property type="entry name" value="Thiolase-like"/>
    <property type="match status" value="2"/>
</dbReference>
<dbReference type="PROSITE" id="PS50075">
    <property type="entry name" value="CARRIER"/>
    <property type="match status" value="2"/>
</dbReference>
<dbReference type="PROSITE" id="PS00606">
    <property type="entry name" value="KS3_1"/>
    <property type="match status" value="2"/>
</dbReference>
<dbReference type="PROSITE" id="PS52004">
    <property type="entry name" value="KS3_2"/>
    <property type="match status" value="2"/>
</dbReference>
<dbReference type="PROSITE" id="PS00012">
    <property type="entry name" value="PHOSPHOPANTETHEINE"/>
    <property type="match status" value="2"/>
</dbReference>
<dbReference type="PROSITE" id="PS52019">
    <property type="entry name" value="PKS_MFAS_DH"/>
    <property type="match status" value="2"/>
</dbReference>
<protein>
    <recommendedName>
        <fullName evidence="7">Spectinabilin polyketide synthase system protein NorA'</fullName>
        <shortName evidence="7">Spectinabilin PKS system protein NorA'</shortName>
        <ecNumber evidence="8">2.3.1.290</ecNumber>
    </recommendedName>
    <alternativeName>
        <fullName evidence="9">Modular polyketide synthase NorA'</fullName>
    </alternativeName>
</protein>
<keyword id="KW-0012">Acyltransferase</keyword>
<keyword id="KW-0045">Antibiotic biosynthesis</keyword>
<keyword id="KW-0511">Multifunctional enzyme</keyword>
<keyword id="KW-0596">Phosphopantetheine</keyword>
<keyword id="KW-0597">Phosphoprotein</keyword>
<keyword id="KW-0677">Repeat</keyword>
<keyword id="KW-0808">Transferase</keyword>
<evidence type="ECO:0000255" key="1"/>
<evidence type="ECO:0000255" key="2">
    <source>
        <dbReference type="PROSITE-ProRule" id="PRU00258"/>
    </source>
</evidence>
<evidence type="ECO:0000255" key="3">
    <source>
        <dbReference type="PROSITE-ProRule" id="PRU01348"/>
    </source>
</evidence>
<evidence type="ECO:0000255" key="4">
    <source>
        <dbReference type="PROSITE-ProRule" id="PRU01363"/>
    </source>
</evidence>
<evidence type="ECO:0000269" key="5">
    <source>
    </source>
</evidence>
<evidence type="ECO:0000303" key="6">
    <source>
    </source>
</evidence>
<evidence type="ECO:0000305" key="7"/>
<evidence type="ECO:0000305" key="8">
    <source>
    </source>
</evidence>
<evidence type="ECO:0000312" key="9">
    <source>
        <dbReference type="EMBL" id="CAO85896.1"/>
    </source>
</evidence>